<comment type="function">
    <text evidence="3 4 5 6">Transcription factor that plays a role of activator of filamentous growth and which is involved in invasive growth at a high temperature. Required for human oral epithelium colonization and damage. Promotes filamentous growth in EFG1- and FLO8-dependent manners. Antagonizes functions of SFL1.</text>
</comment>
<comment type="subcellular location">
    <subcellularLocation>
        <location evidence="4">Nucleus</location>
    </subcellularLocation>
    <text>Localizes to the nucleus in both yeast and hyphal cells.</text>
</comment>
<comment type="induction">
    <text evidence="3 4">Induced at high temperature and during human oral epithelium infection.</text>
</comment>
<comment type="disruption phenotype">
    <text evidence="3">Fails to undergo filamentation under a range of hypha-inducing conditions and attenuates the virulence towards reconstituted human oral epithelium and in a mouse model of gastrointestinal colonization and dissemination.</text>
</comment>
<comment type="similarity">
    <text evidence="7">Belongs to the HSF family.</text>
</comment>
<name>SFL2_CANAL</name>
<organism>
    <name type="scientific">Candida albicans (strain SC5314 / ATCC MYA-2876)</name>
    <name type="common">Yeast</name>
    <dbReference type="NCBI Taxonomy" id="237561"/>
    <lineage>
        <taxon>Eukaryota</taxon>
        <taxon>Fungi</taxon>
        <taxon>Dikarya</taxon>
        <taxon>Ascomycota</taxon>
        <taxon>Saccharomycotina</taxon>
        <taxon>Pichiomycetes</taxon>
        <taxon>Debaryomycetaceae</taxon>
        <taxon>Candida/Lodderomyces clade</taxon>
        <taxon>Candida</taxon>
    </lineage>
</organism>
<sequence>MSKKNPGDPRVKKNAFVHKLYTMLHDPALSHLIWWTNRNGEQNTFALCPGKEFADCLTQYFKHGNVASFVRQLHMYGFHKVSDPLPITYPPNGNNNNNNNNKEVPPVWEFKHSSGRFKRGDETSLVYIKRRSSSNHTSGSTIYAEPIYNPLLTNPYNQPQFMYQDYSMGPPVEVQQFYNYQNQPLMYYQQPPGQVPPPPPPSLPPHQQPEMALQYHQYNNYQQPPPAPPAPPPQPGNVLFGYQQVAPPQQPGSTVQQIPANAPPTLDQTQPLSYTPQLEYQQQQYPQPPLPPPPPQLQLQTSPGIPKVNDNLSRPSPNEQHLQFRKIWPDENNEANSKPRNPSLMFDPLLRVNSEGSPKTQPNHSVSLLNNEVRSESSTSSSSTTVTSTALPPPSAIDRSVSLVGGSPFDLSSRMNNQQSFNRTPSISTPPTQNGRLPKISSPLIPSNTESQSPTMVTGTDNDVGVTSKGSTSIISVSKKPSVFSNSLQERLRPSMFEYHPIGNNLSKDVLTIPKISTNSNSGSRTTSQSSMSSASALSSKKSSLSSISSTHGNLSILNSTNYRSTSVGGSGSGPFSTSTSTSTTSPTLSSLLHHPQHEPQNSTIANGTSIRSSISSSQSISSPPLTTTTTTTTTDQRQLSNSPISRQQQQQPNNNTNKKVSVTSLLLPSHSQSQGYAQPLYKSSVIAEEENSTTSSGGGYRSKSDDDTDNMNK</sequence>
<protein>
    <recommendedName>
        <fullName>Transcription factor SFL2</fullName>
    </recommendedName>
</protein>
<keyword id="KW-0010">Activator</keyword>
<keyword id="KW-0238">DNA-binding</keyword>
<keyword id="KW-0539">Nucleus</keyword>
<keyword id="KW-1185">Reference proteome</keyword>
<keyword id="KW-0804">Transcription</keyword>
<keyword id="KW-0805">Transcription regulation</keyword>
<keyword id="KW-0843">Virulence</keyword>
<accession>Q5AK51</accession>
<accession>A0A1D8PP22</accession>
<accession>Q5AKL3</accession>
<reference key="1">
    <citation type="journal article" date="2004" name="Proc. Natl. Acad. Sci. U.S.A.">
        <title>The diploid genome sequence of Candida albicans.</title>
        <authorList>
            <person name="Jones T."/>
            <person name="Federspiel N.A."/>
            <person name="Chibana H."/>
            <person name="Dungan J."/>
            <person name="Kalman S."/>
            <person name="Magee B.B."/>
            <person name="Newport G."/>
            <person name="Thorstenson Y.R."/>
            <person name="Agabian N."/>
            <person name="Magee P.T."/>
            <person name="Davis R.W."/>
            <person name="Scherer S."/>
        </authorList>
    </citation>
    <scope>NUCLEOTIDE SEQUENCE [LARGE SCALE GENOMIC DNA]</scope>
    <source>
        <strain>SC5314 / ATCC MYA-2876</strain>
    </source>
</reference>
<reference key="2">
    <citation type="journal article" date="2007" name="Genome Biol.">
        <title>Assembly of the Candida albicans genome into sixteen supercontigs aligned on the eight chromosomes.</title>
        <authorList>
            <person name="van het Hoog M."/>
            <person name="Rast T.J."/>
            <person name="Martchenko M."/>
            <person name="Grindle S."/>
            <person name="Dignard D."/>
            <person name="Hogues H."/>
            <person name="Cuomo C."/>
            <person name="Berriman M."/>
            <person name="Scherer S."/>
            <person name="Magee B.B."/>
            <person name="Whiteway M."/>
            <person name="Chibana H."/>
            <person name="Nantel A."/>
            <person name="Magee P.T."/>
        </authorList>
    </citation>
    <scope>GENOME REANNOTATION</scope>
    <source>
        <strain>SC5314 / ATCC MYA-2876</strain>
    </source>
</reference>
<reference key="3">
    <citation type="journal article" date="2013" name="Genome Biol.">
        <title>Assembly of a phased diploid Candida albicans genome facilitates allele-specific measurements and provides a simple model for repeat and indel structure.</title>
        <authorList>
            <person name="Muzzey D."/>
            <person name="Schwartz K."/>
            <person name="Weissman J.S."/>
            <person name="Sherlock G."/>
        </authorList>
    </citation>
    <scope>NUCLEOTIDE SEQUENCE [LARGE SCALE GENOMIC DNA]</scope>
    <scope>GENOME REANNOTATION</scope>
    <source>
        <strain>SC5314 / ATCC MYA-2876</strain>
    </source>
</reference>
<reference key="4">
    <citation type="journal article" date="2010" name="Eukaryot. Cell">
        <title>Comparative transcript profiling of Candida albicans and Candida dubliniensis identifies SFL2, a C. albicans gene required for virulence in a reconstituted epithelial infection model.</title>
        <authorList>
            <person name="Spiering M.J."/>
            <person name="Moran G.P."/>
            <person name="Chauvel M."/>
            <person name="Maccallum D.M."/>
            <person name="Higgins J."/>
            <person name="Hokamp K."/>
            <person name="Yeomans T."/>
            <person name="d'Enfert C."/>
            <person name="Coleman D.C."/>
            <person name="Sullivan D.J."/>
        </authorList>
    </citation>
    <scope>INDUCTION</scope>
    <scope>FUNCTION</scope>
    <scope>DISRUPTION PHENOTYPE</scope>
</reference>
<reference key="5">
    <citation type="journal article" date="2011" name="FEMS Yeast Res.">
        <title>Candida albicans Sfl2, a temperature-induced transcriptional regulator, is required for virulence in a murine gastrointestinal infection model.</title>
        <authorList>
            <person name="Song W."/>
            <person name="Wang H."/>
            <person name="Chen J."/>
        </authorList>
    </citation>
    <scope>INDUCTION</scope>
    <scope>FUNCTION</scope>
    <scope>SUBCELLULAR LOCATION</scope>
</reference>
<reference key="6">
    <citation type="journal article" date="2012" name="PLoS ONE">
        <title>A versatile overexpression strategy in the pathogenic yeast Candida albicans: identification of regulators of morphogenesis and fitness.</title>
        <authorList>
            <person name="Chauvel M."/>
            <person name="Nesseir A."/>
            <person name="Cabral V."/>
            <person name="Znaidi S."/>
            <person name="Goyard S."/>
            <person name="Bachellier-Bassi S."/>
            <person name="Firon A."/>
            <person name="Legrand M."/>
            <person name="Diogo D."/>
            <person name="Naulleau C."/>
            <person name="Rossignol T."/>
            <person name="d'Enfert C."/>
        </authorList>
    </citation>
    <scope>FUNCTION</scope>
</reference>
<reference key="7">
    <citation type="journal article" date="2013" name="PLoS Pathog.">
        <title>A comprehensive functional portrait of two heat shock factor-type transcriptional regulators involved in Candida albicans morphogenesis and virulence.</title>
        <authorList>
            <person name="Znaidi S."/>
            <person name="Nesseir A."/>
            <person name="Chauvel M."/>
            <person name="Rossignol T."/>
            <person name="d'Enfert C."/>
        </authorList>
    </citation>
    <scope>FUNCTION</scope>
    <scope>DNA-BINDING</scope>
</reference>
<dbReference type="EMBL" id="CP017627">
    <property type="protein sequence ID" value="AOW29887.1"/>
    <property type="molecule type" value="Genomic_DNA"/>
</dbReference>
<dbReference type="RefSeq" id="XP_721878.2">
    <property type="nucleotide sequence ID" value="XM_716785.2"/>
</dbReference>
<dbReference type="SMR" id="Q5AK51"/>
<dbReference type="BioGRID" id="1219336">
    <property type="interactions" value="2"/>
</dbReference>
<dbReference type="STRING" id="237561.Q5AK51"/>
<dbReference type="EnsemblFungi" id="C5_04830W_A-T">
    <property type="protein sequence ID" value="C5_04830W_A-T-p1"/>
    <property type="gene ID" value="C5_04830W_A"/>
</dbReference>
<dbReference type="GeneID" id="3636434"/>
<dbReference type="KEGG" id="cal:CAALFM_C504830WA"/>
<dbReference type="CGD" id="CAL0000195882">
    <property type="gene designation" value="SFL2"/>
</dbReference>
<dbReference type="VEuPathDB" id="FungiDB:C5_04830W_A"/>
<dbReference type="eggNOG" id="KOG0627">
    <property type="taxonomic scope" value="Eukaryota"/>
</dbReference>
<dbReference type="HOGENOM" id="CLU_015115_0_0_1"/>
<dbReference type="InParanoid" id="Q5AK51"/>
<dbReference type="OrthoDB" id="60033at2759"/>
<dbReference type="PHI-base" id="PHI:2569"/>
<dbReference type="PRO" id="PR:Q5AK51"/>
<dbReference type="Proteomes" id="UP000000559">
    <property type="component" value="Chromosome 5"/>
</dbReference>
<dbReference type="GO" id="GO:0000228">
    <property type="term" value="C:nuclear chromosome"/>
    <property type="evidence" value="ECO:0000314"/>
    <property type="project" value="CGD"/>
</dbReference>
<dbReference type="GO" id="GO:0005634">
    <property type="term" value="C:nucleus"/>
    <property type="evidence" value="ECO:0000314"/>
    <property type="project" value="CGD"/>
</dbReference>
<dbReference type="GO" id="GO:0001216">
    <property type="term" value="F:DNA-binding transcription activator activity"/>
    <property type="evidence" value="ECO:0000315"/>
    <property type="project" value="CGD"/>
</dbReference>
<dbReference type="GO" id="GO:0003700">
    <property type="term" value="F:DNA-binding transcription factor activity"/>
    <property type="evidence" value="ECO:0000314"/>
    <property type="project" value="CGD"/>
</dbReference>
<dbReference type="GO" id="GO:0043565">
    <property type="term" value="F:sequence-specific DNA binding"/>
    <property type="evidence" value="ECO:0007669"/>
    <property type="project" value="InterPro"/>
</dbReference>
<dbReference type="GO" id="GO:0036244">
    <property type="term" value="P:cellular response to neutral pH"/>
    <property type="evidence" value="ECO:0000315"/>
    <property type="project" value="CGD"/>
</dbReference>
<dbReference type="GO" id="GO:0030447">
    <property type="term" value="P:filamentous growth"/>
    <property type="evidence" value="ECO:0000315"/>
    <property type="project" value="CGD"/>
</dbReference>
<dbReference type="GO" id="GO:0044182">
    <property type="term" value="P:filamentous growth of a population of unicellular organisms"/>
    <property type="evidence" value="ECO:0000315"/>
    <property type="project" value="CGD"/>
</dbReference>
<dbReference type="GO" id="GO:0036180">
    <property type="term" value="P:filamentous growth of a population of unicellular organisms in response to biotic stimulus"/>
    <property type="evidence" value="ECO:0000315"/>
    <property type="project" value="CGD"/>
</dbReference>
<dbReference type="GO" id="GO:0036178">
    <property type="term" value="P:filamentous growth of a population of unicellular organisms in response to neutral pH"/>
    <property type="evidence" value="ECO:0000315"/>
    <property type="project" value="CGD"/>
</dbReference>
<dbReference type="GO" id="GO:0000128">
    <property type="term" value="P:flocculation"/>
    <property type="evidence" value="ECO:0000316"/>
    <property type="project" value="CGD"/>
</dbReference>
<dbReference type="GO" id="GO:1900429">
    <property type="term" value="P:negative regulation of filamentous growth of a population of unicellular organisms"/>
    <property type="evidence" value="ECO:0000315"/>
    <property type="project" value="CGD"/>
</dbReference>
<dbReference type="GO" id="GO:0060257">
    <property type="term" value="P:negative regulation of flocculation"/>
    <property type="evidence" value="ECO:0000315"/>
    <property type="project" value="CGD"/>
</dbReference>
<dbReference type="GO" id="GO:1900445">
    <property type="term" value="P:positive regulation of filamentous growth of a population of unicellular organisms in response to biotic stimulus"/>
    <property type="evidence" value="ECO:0000315"/>
    <property type="project" value="CGD"/>
</dbReference>
<dbReference type="GO" id="GO:0045944">
    <property type="term" value="P:positive regulation of transcription by RNA polymerase II"/>
    <property type="evidence" value="ECO:0000314"/>
    <property type="project" value="CGD"/>
</dbReference>
<dbReference type="Gene3D" id="1.10.10.10">
    <property type="entry name" value="Winged helix-like DNA-binding domain superfamily/Winged helix DNA-binding domain"/>
    <property type="match status" value="1"/>
</dbReference>
<dbReference type="InterPro" id="IPR000232">
    <property type="entry name" value="HSF_DNA-bd"/>
</dbReference>
<dbReference type="InterPro" id="IPR036388">
    <property type="entry name" value="WH-like_DNA-bd_sf"/>
</dbReference>
<dbReference type="InterPro" id="IPR036390">
    <property type="entry name" value="WH_DNA-bd_sf"/>
</dbReference>
<dbReference type="PANTHER" id="PTHR10015:SF427">
    <property type="entry name" value="HEAT SHOCK FACTOR PROTEIN"/>
    <property type="match status" value="1"/>
</dbReference>
<dbReference type="PANTHER" id="PTHR10015">
    <property type="entry name" value="HEAT SHOCK TRANSCRIPTION FACTOR"/>
    <property type="match status" value="1"/>
</dbReference>
<dbReference type="Pfam" id="PF00447">
    <property type="entry name" value="HSF_DNA-bind"/>
    <property type="match status" value="1"/>
</dbReference>
<dbReference type="PRINTS" id="PR00056">
    <property type="entry name" value="HSFDOMAIN"/>
</dbReference>
<dbReference type="SMART" id="SM00415">
    <property type="entry name" value="HSF"/>
    <property type="match status" value="1"/>
</dbReference>
<dbReference type="SUPFAM" id="SSF46785">
    <property type="entry name" value="Winged helix' DNA-binding domain"/>
    <property type="match status" value="1"/>
</dbReference>
<dbReference type="PROSITE" id="PS00434">
    <property type="entry name" value="HSF_DOMAIN"/>
    <property type="match status" value="1"/>
</dbReference>
<feature type="chain" id="PRO_0000425615" description="Transcription factor SFL2">
    <location>
        <begin position="1"/>
        <end position="714"/>
    </location>
</feature>
<feature type="DNA-binding region" evidence="1">
    <location>
        <begin position="15"/>
        <end position="134"/>
    </location>
</feature>
<feature type="region of interest" description="Disordered" evidence="2">
    <location>
        <begin position="187"/>
        <end position="467"/>
    </location>
</feature>
<feature type="region of interest" description="Disordered" evidence="2">
    <location>
        <begin position="565"/>
        <end position="658"/>
    </location>
</feature>
<feature type="region of interest" description="Disordered" evidence="2">
    <location>
        <begin position="670"/>
        <end position="714"/>
    </location>
</feature>
<feature type="compositionally biased region" description="Pro residues" evidence="2">
    <location>
        <begin position="193"/>
        <end position="207"/>
    </location>
</feature>
<feature type="compositionally biased region" description="Pro residues" evidence="2">
    <location>
        <begin position="223"/>
        <end position="235"/>
    </location>
</feature>
<feature type="compositionally biased region" description="Polar residues" evidence="2">
    <location>
        <begin position="266"/>
        <end position="275"/>
    </location>
</feature>
<feature type="compositionally biased region" description="Low complexity" evidence="2">
    <location>
        <begin position="276"/>
        <end position="285"/>
    </location>
</feature>
<feature type="compositionally biased region" description="Pro residues" evidence="2">
    <location>
        <begin position="286"/>
        <end position="296"/>
    </location>
</feature>
<feature type="compositionally biased region" description="Polar residues" evidence="2">
    <location>
        <begin position="310"/>
        <end position="321"/>
    </location>
</feature>
<feature type="compositionally biased region" description="Polar residues" evidence="2">
    <location>
        <begin position="354"/>
        <end position="372"/>
    </location>
</feature>
<feature type="compositionally biased region" description="Low complexity" evidence="2">
    <location>
        <begin position="376"/>
        <end position="389"/>
    </location>
</feature>
<feature type="compositionally biased region" description="Polar residues" evidence="2">
    <location>
        <begin position="413"/>
        <end position="435"/>
    </location>
</feature>
<feature type="compositionally biased region" description="Polar residues" evidence="2">
    <location>
        <begin position="444"/>
        <end position="461"/>
    </location>
</feature>
<feature type="compositionally biased region" description="Low complexity" evidence="2">
    <location>
        <begin position="574"/>
        <end position="591"/>
    </location>
</feature>
<feature type="compositionally biased region" description="Polar residues" evidence="2">
    <location>
        <begin position="599"/>
        <end position="608"/>
    </location>
</feature>
<feature type="compositionally biased region" description="Low complexity" evidence="2">
    <location>
        <begin position="609"/>
        <end position="641"/>
    </location>
</feature>
<feature type="compositionally biased region" description="Low complexity" evidence="2">
    <location>
        <begin position="648"/>
        <end position="658"/>
    </location>
</feature>
<feature type="compositionally biased region" description="Basic and acidic residues" evidence="2">
    <location>
        <begin position="703"/>
        <end position="714"/>
    </location>
</feature>
<evidence type="ECO:0000250" key="1"/>
<evidence type="ECO:0000256" key="2">
    <source>
        <dbReference type="SAM" id="MobiDB-lite"/>
    </source>
</evidence>
<evidence type="ECO:0000269" key="3">
    <source>
    </source>
</evidence>
<evidence type="ECO:0000269" key="4">
    <source>
    </source>
</evidence>
<evidence type="ECO:0000269" key="5">
    <source>
    </source>
</evidence>
<evidence type="ECO:0000269" key="6">
    <source>
    </source>
</evidence>
<evidence type="ECO:0000305" key="7"/>
<proteinExistence type="evidence at protein level"/>
<gene>
    <name type="primary">SFL2</name>
    <name type="ordered locus">CAALFM_C504830WA</name>
    <name type="ORF">CaO19.11452</name>
    <name type="ORF">CaO19.3969</name>
</gene>